<gene>
    <name evidence="1" type="primary">leuS</name>
    <name type="ordered locus">BPUM_2669</name>
</gene>
<dbReference type="EC" id="6.1.1.4" evidence="1"/>
<dbReference type="EMBL" id="CP000813">
    <property type="protein sequence ID" value="ABV63327.1"/>
    <property type="status" value="ALT_INIT"/>
    <property type="molecule type" value="Genomic_DNA"/>
</dbReference>
<dbReference type="RefSeq" id="WP_041815857.1">
    <property type="nucleotide sequence ID" value="NZ_VEIS01000006.1"/>
</dbReference>
<dbReference type="SMR" id="A8FGG0"/>
<dbReference type="STRING" id="315750.BPUM_2669"/>
<dbReference type="GeneID" id="5621934"/>
<dbReference type="KEGG" id="bpu:BPUM_2669"/>
<dbReference type="eggNOG" id="COG0495">
    <property type="taxonomic scope" value="Bacteria"/>
</dbReference>
<dbReference type="HOGENOM" id="CLU_004427_0_0_9"/>
<dbReference type="OrthoDB" id="9810365at2"/>
<dbReference type="Proteomes" id="UP000001355">
    <property type="component" value="Chromosome"/>
</dbReference>
<dbReference type="GO" id="GO:0005829">
    <property type="term" value="C:cytosol"/>
    <property type="evidence" value="ECO:0007669"/>
    <property type="project" value="TreeGrafter"/>
</dbReference>
<dbReference type="GO" id="GO:0002161">
    <property type="term" value="F:aminoacyl-tRNA deacylase activity"/>
    <property type="evidence" value="ECO:0007669"/>
    <property type="project" value="InterPro"/>
</dbReference>
<dbReference type="GO" id="GO:0005524">
    <property type="term" value="F:ATP binding"/>
    <property type="evidence" value="ECO:0007669"/>
    <property type="project" value="UniProtKB-UniRule"/>
</dbReference>
<dbReference type="GO" id="GO:0004823">
    <property type="term" value="F:leucine-tRNA ligase activity"/>
    <property type="evidence" value="ECO:0007669"/>
    <property type="project" value="UniProtKB-UniRule"/>
</dbReference>
<dbReference type="GO" id="GO:0006429">
    <property type="term" value="P:leucyl-tRNA aminoacylation"/>
    <property type="evidence" value="ECO:0007669"/>
    <property type="project" value="UniProtKB-UniRule"/>
</dbReference>
<dbReference type="CDD" id="cd07958">
    <property type="entry name" value="Anticodon_Ia_Leu_BEm"/>
    <property type="match status" value="1"/>
</dbReference>
<dbReference type="CDD" id="cd00812">
    <property type="entry name" value="LeuRS_core"/>
    <property type="match status" value="1"/>
</dbReference>
<dbReference type="FunFam" id="3.10.20.590:FF:000001">
    <property type="entry name" value="Leucine--tRNA ligase"/>
    <property type="match status" value="1"/>
</dbReference>
<dbReference type="FunFam" id="3.40.50.620:FF:000056">
    <property type="entry name" value="Leucine--tRNA ligase"/>
    <property type="match status" value="1"/>
</dbReference>
<dbReference type="FunFam" id="3.40.50.620:FF:000077">
    <property type="entry name" value="Leucine--tRNA ligase"/>
    <property type="match status" value="1"/>
</dbReference>
<dbReference type="FunFam" id="3.90.740.10:FF:000017">
    <property type="entry name" value="Leucine--tRNA ligase"/>
    <property type="match status" value="1"/>
</dbReference>
<dbReference type="FunFam" id="1.10.730.10:FF:000011">
    <property type="entry name" value="Leucine--tRNA ligase chloroplastic/mitochondrial"/>
    <property type="match status" value="1"/>
</dbReference>
<dbReference type="Gene3D" id="3.10.20.590">
    <property type="match status" value="1"/>
</dbReference>
<dbReference type="Gene3D" id="3.40.50.620">
    <property type="entry name" value="HUPs"/>
    <property type="match status" value="2"/>
</dbReference>
<dbReference type="Gene3D" id="1.10.730.10">
    <property type="entry name" value="Isoleucyl-tRNA Synthetase, Domain 1"/>
    <property type="match status" value="1"/>
</dbReference>
<dbReference type="HAMAP" id="MF_00049_B">
    <property type="entry name" value="Leu_tRNA_synth_B"/>
    <property type="match status" value="1"/>
</dbReference>
<dbReference type="InterPro" id="IPR001412">
    <property type="entry name" value="aa-tRNA-synth_I_CS"/>
</dbReference>
<dbReference type="InterPro" id="IPR002300">
    <property type="entry name" value="aa-tRNA-synth_Ia"/>
</dbReference>
<dbReference type="InterPro" id="IPR002302">
    <property type="entry name" value="Leu-tRNA-ligase"/>
</dbReference>
<dbReference type="InterPro" id="IPR025709">
    <property type="entry name" value="Leu_tRNA-synth_edit"/>
</dbReference>
<dbReference type="InterPro" id="IPR013155">
    <property type="entry name" value="M/V/L/I-tRNA-synth_anticd-bd"/>
</dbReference>
<dbReference type="InterPro" id="IPR015413">
    <property type="entry name" value="Methionyl/Leucyl_tRNA_Synth"/>
</dbReference>
<dbReference type="InterPro" id="IPR014729">
    <property type="entry name" value="Rossmann-like_a/b/a_fold"/>
</dbReference>
<dbReference type="InterPro" id="IPR009080">
    <property type="entry name" value="tRNAsynth_Ia_anticodon-bd"/>
</dbReference>
<dbReference type="InterPro" id="IPR009008">
    <property type="entry name" value="Val/Leu/Ile-tRNA-synth_edit"/>
</dbReference>
<dbReference type="NCBIfam" id="TIGR00396">
    <property type="entry name" value="leuS_bact"/>
    <property type="match status" value="1"/>
</dbReference>
<dbReference type="PANTHER" id="PTHR43740:SF2">
    <property type="entry name" value="LEUCINE--TRNA LIGASE, MITOCHONDRIAL"/>
    <property type="match status" value="1"/>
</dbReference>
<dbReference type="PANTHER" id="PTHR43740">
    <property type="entry name" value="LEUCYL-TRNA SYNTHETASE"/>
    <property type="match status" value="1"/>
</dbReference>
<dbReference type="Pfam" id="PF08264">
    <property type="entry name" value="Anticodon_1"/>
    <property type="match status" value="1"/>
</dbReference>
<dbReference type="Pfam" id="PF00133">
    <property type="entry name" value="tRNA-synt_1"/>
    <property type="match status" value="1"/>
</dbReference>
<dbReference type="Pfam" id="PF13603">
    <property type="entry name" value="tRNA-synt_1_2"/>
    <property type="match status" value="1"/>
</dbReference>
<dbReference type="Pfam" id="PF09334">
    <property type="entry name" value="tRNA-synt_1g"/>
    <property type="match status" value="1"/>
</dbReference>
<dbReference type="PRINTS" id="PR00985">
    <property type="entry name" value="TRNASYNTHLEU"/>
</dbReference>
<dbReference type="SUPFAM" id="SSF47323">
    <property type="entry name" value="Anticodon-binding domain of a subclass of class I aminoacyl-tRNA synthetases"/>
    <property type="match status" value="1"/>
</dbReference>
<dbReference type="SUPFAM" id="SSF52374">
    <property type="entry name" value="Nucleotidylyl transferase"/>
    <property type="match status" value="1"/>
</dbReference>
<dbReference type="SUPFAM" id="SSF50677">
    <property type="entry name" value="ValRS/IleRS/LeuRS editing domain"/>
    <property type="match status" value="1"/>
</dbReference>
<dbReference type="PROSITE" id="PS00178">
    <property type="entry name" value="AA_TRNA_LIGASE_I"/>
    <property type="match status" value="1"/>
</dbReference>
<keyword id="KW-0030">Aminoacyl-tRNA synthetase</keyword>
<keyword id="KW-0067">ATP-binding</keyword>
<keyword id="KW-0963">Cytoplasm</keyword>
<keyword id="KW-0436">Ligase</keyword>
<keyword id="KW-0547">Nucleotide-binding</keyword>
<keyword id="KW-0648">Protein biosynthesis</keyword>
<protein>
    <recommendedName>
        <fullName evidence="1">Leucine--tRNA ligase</fullName>
        <ecNumber evidence="1">6.1.1.4</ecNumber>
    </recommendedName>
    <alternativeName>
        <fullName evidence="1">Leucyl-tRNA synthetase</fullName>
        <shortName evidence="1">LeuRS</shortName>
    </alternativeName>
</protein>
<evidence type="ECO:0000255" key="1">
    <source>
        <dbReference type="HAMAP-Rule" id="MF_00049"/>
    </source>
</evidence>
<evidence type="ECO:0000305" key="2"/>
<name>SYL_BACP2</name>
<feature type="chain" id="PRO_0000334730" description="Leucine--tRNA ligase">
    <location>
        <begin position="1"/>
        <end position="804"/>
    </location>
</feature>
<feature type="short sequence motif" description="'HIGH' region">
    <location>
        <begin position="40"/>
        <end position="51"/>
    </location>
</feature>
<feature type="short sequence motif" description="'KMSKS' region">
    <location>
        <begin position="576"/>
        <end position="580"/>
    </location>
</feature>
<feature type="binding site" evidence="1">
    <location>
        <position position="579"/>
    </location>
    <ligand>
        <name>ATP</name>
        <dbReference type="ChEBI" id="CHEBI:30616"/>
    </ligand>
</feature>
<accession>A8FGG0</accession>
<sequence>MSFQHREIEKKWQDYWLTHKTFATSDSEDKPKFYALDMFPYPSGAGLHVGHPEGYTATDILSRMKRMQGYDVLHPMGWDAFGLPAEQYALDTGNDPAVFTEENINNFRRQIQSLGFSYDWDREINTTDPNYYKWTQWIFLKLYEKGLAYIDEVPVNWCPALGTVLANEEVIDGKSERGGHPVERRPMKQWMLKITAYADRLLEDLEDIDWPESIKDMQRNWIGRSEGAHVHFEIEGHDEQFTVFTTRPDTLFGATYAVLAPEHALVEKITTATQKEAVEAYIKEIQSKSDLERTDLAKTKTGIFTGAYAVNPLNGEKMPIWIADYVLATYGTGAIMAVPAHDERDYEFAKTFDLPIKAVVEGGDIEEEAYTGDGKHINSDFLDGLGKEEAIEKVIAWLEEHQKGEKKVTYRLRDWLFSRQRYWGEPIPIIHWEDGTSSAVSEEDLPLILPKTTEIKPSGTGESPLANIKDWVEVVDPVTGKKGRRETNTMPQWAGSCWYFLRYIDPHNSEELASPEKLKKWLPVDVYIGGAEHAVLHLLYARFWHKFLYDIGVVPTKEPFMKLFNQGMILGENNEKMSKSKGNVVNPDDIVESHGADTLRLYEMFMGPLDASIAWSETGLDGARRFLDRVWRLFTNEDGTISDKVTEQTGGALERSYHETVMKVTDHYEGLRFNTGISQLMVFINDAYKADTLPKEYAEGFVKLLSPIAPHLAEELWNKLGHEGSISYEAWPQYDESKLVDDEVEIVVQLNGKVKAKLTVPADATKEQLEDLAKSDARVKEQLEGKTIRKVIAVPGKLVNIVAN</sequence>
<organism>
    <name type="scientific">Bacillus pumilus (strain SAFR-032)</name>
    <dbReference type="NCBI Taxonomy" id="315750"/>
    <lineage>
        <taxon>Bacteria</taxon>
        <taxon>Bacillati</taxon>
        <taxon>Bacillota</taxon>
        <taxon>Bacilli</taxon>
        <taxon>Bacillales</taxon>
        <taxon>Bacillaceae</taxon>
        <taxon>Bacillus</taxon>
    </lineage>
</organism>
<reference key="1">
    <citation type="journal article" date="2007" name="PLoS ONE">
        <title>Paradoxical DNA repair and peroxide resistance gene conservation in Bacillus pumilus SAFR-032.</title>
        <authorList>
            <person name="Gioia J."/>
            <person name="Yerrapragada S."/>
            <person name="Qin X."/>
            <person name="Jiang H."/>
            <person name="Igboeli O.C."/>
            <person name="Muzny D."/>
            <person name="Dugan-Rocha S."/>
            <person name="Ding Y."/>
            <person name="Hawes A."/>
            <person name="Liu W."/>
            <person name="Perez L."/>
            <person name="Kovar C."/>
            <person name="Dinh H."/>
            <person name="Lee S."/>
            <person name="Nazareth L."/>
            <person name="Blyth P."/>
            <person name="Holder M."/>
            <person name="Buhay C."/>
            <person name="Tirumalai M.R."/>
            <person name="Liu Y."/>
            <person name="Dasgupta I."/>
            <person name="Bokhetache L."/>
            <person name="Fujita M."/>
            <person name="Karouia F."/>
            <person name="Eswara Moorthy P."/>
            <person name="Siefert J."/>
            <person name="Uzman A."/>
            <person name="Buzumbo P."/>
            <person name="Verma A."/>
            <person name="Zwiya H."/>
            <person name="McWilliams B.D."/>
            <person name="Olowu A."/>
            <person name="Clinkenbeard K.D."/>
            <person name="Newcombe D."/>
            <person name="Golebiewski L."/>
            <person name="Petrosino J.F."/>
            <person name="Nicholson W.L."/>
            <person name="Fox G.E."/>
            <person name="Venkateswaran K."/>
            <person name="Highlander S.K."/>
            <person name="Weinstock G.M."/>
        </authorList>
    </citation>
    <scope>NUCLEOTIDE SEQUENCE [LARGE SCALE GENOMIC DNA]</scope>
    <source>
        <strain>SAFR-032</strain>
    </source>
</reference>
<proteinExistence type="inferred from homology"/>
<comment type="catalytic activity">
    <reaction evidence="1">
        <text>tRNA(Leu) + L-leucine + ATP = L-leucyl-tRNA(Leu) + AMP + diphosphate</text>
        <dbReference type="Rhea" id="RHEA:11688"/>
        <dbReference type="Rhea" id="RHEA-COMP:9613"/>
        <dbReference type="Rhea" id="RHEA-COMP:9622"/>
        <dbReference type="ChEBI" id="CHEBI:30616"/>
        <dbReference type="ChEBI" id="CHEBI:33019"/>
        <dbReference type="ChEBI" id="CHEBI:57427"/>
        <dbReference type="ChEBI" id="CHEBI:78442"/>
        <dbReference type="ChEBI" id="CHEBI:78494"/>
        <dbReference type="ChEBI" id="CHEBI:456215"/>
        <dbReference type="EC" id="6.1.1.4"/>
    </reaction>
</comment>
<comment type="subcellular location">
    <subcellularLocation>
        <location evidence="1">Cytoplasm</location>
    </subcellularLocation>
</comment>
<comment type="similarity">
    <text evidence="1">Belongs to the class-I aminoacyl-tRNA synthetase family.</text>
</comment>
<comment type="sequence caution" evidence="2">
    <conflict type="erroneous initiation">
        <sequence resource="EMBL-CDS" id="ABV63327"/>
    </conflict>
</comment>